<keyword id="KW-1185">Reference proteome</keyword>
<protein>
    <recommendedName>
        <fullName>14-3-3-like protein 16R</fullName>
    </recommendedName>
</protein>
<comment type="similarity">
    <text evidence="2">Belongs to the 14-3-3 family.</text>
</comment>
<reference key="1">
    <citation type="submission" date="1997-03" db="EMBL/GenBank/DDBJ databases">
        <authorList>
            <person name="Wilczynski G."/>
            <person name="Szopa J."/>
        </authorList>
    </citation>
    <scope>NUCLEOTIDE SEQUENCE [MRNA]</scope>
    <source>
        <strain>cv. Desiree</strain>
        <tissue>Root</tissue>
    </source>
</reference>
<proteinExistence type="evidence at transcript level"/>
<evidence type="ECO:0000256" key="1">
    <source>
        <dbReference type="SAM" id="MobiDB-lite"/>
    </source>
</evidence>
<evidence type="ECO:0000305" key="2"/>
<dbReference type="EMBL" id="Y11685">
    <property type="protein sequence ID" value="CAA72381.1"/>
    <property type="molecule type" value="mRNA"/>
</dbReference>
<dbReference type="RefSeq" id="NP_001275062.1">
    <property type="nucleotide sequence ID" value="NM_001288133.1"/>
</dbReference>
<dbReference type="SMR" id="P93784"/>
<dbReference type="FunCoup" id="P93784">
    <property type="interactions" value="3155"/>
</dbReference>
<dbReference type="STRING" id="4113.P93784"/>
<dbReference type="PaxDb" id="4113-PGSC0003DMT400041810"/>
<dbReference type="GeneID" id="102588264"/>
<dbReference type="KEGG" id="sot:102588264"/>
<dbReference type="eggNOG" id="KOG0841">
    <property type="taxonomic scope" value="Eukaryota"/>
</dbReference>
<dbReference type="InParanoid" id="P93784"/>
<dbReference type="OrthoDB" id="10260625at2759"/>
<dbReference type="Proteomes" id="UP000011115">
    <property type="component" value="Unassembled WGS sequence"/>
</dbReference>
<dbReference type="ExpressionAtlas" id="P93784">
    <property type="expression patterns" value="baseline"/>
</dbReference>
<dbReference type="GO" id="GO:0005737">
    <property type="term" value="C:cytoplasm"/>
    <property type="evidence" value="ECO:0000318"/>
    <property type="project" value="GO_Central"/>
</dbReference>
<dbReference type="GO" id="GO:0008104">
    <property type="term" value="P:protein localization"/>
    <property type="evidence" value="ECO:0000318"/>
    <property type="project" value="GO_Central"/>
</dbReference>
<dbReference type="GO" id="GO:0007165">
    <property type="term" value="P:signal transduction"/>
    <property type="evidence" value="ECO:0000318"/>
    <property type="project" value="GO_Central"/>
</dbReference>
<dbReference type="FunFam" id="1.20.190.20:FF:000002">
    <property type="entry name" value="14-3-3 protein epsilon"/>
    <property type="match status" value="1"/>
</dbReference>
<dbReference type="Gene3D" id="1.20.190.20">
    <property type="entry name" value="14-3-3 domain"/>
    <property type="match status" value="1"/>
</dbReference>
<dbReference type="InterPro" id="IPR000308">
    <property type="entry name" value="14-3-3"/>
</dbReference>
<dbReference type="InterPro" id="IPR023409">
    <property type="entry name" value="14-3-3_CS"/>
</dbReference>
<dbReference type="InterPro" id="IPR036815">
    <property type="entry name" value="14-3-3_dom_sf"/>
</dbReference>
<dbReference type="InterPro" id="IPR023410">
    <property type="entry name" value="14-3-3_domain"/>
</dbReference>
<dbReference type="PANTHER" id="PTHR18860">
    <property type="entry name" value="14-3-3 PROTEIN"/>
    <property type="match status" value="1"/>
</dbReference>
<dbReference type="Pfam" id="PF00244">
    <property type="entry name" value="14-3-3"/>
    <property type="match status" value="1"/>
</dbReference>
<dbReference type="PIRSF" id="PIRSF000868">
    <property type="entry name" value="14-3-3"/>
    <property type="match status" value="1"/>
</dbReference>
<dbReference type="PRINTS" id="PR00305">
    <property type="entry name" value="1433ZETA"/>
</dbReference>
<dbReference type="SMART" id="SM00101">
    <property type="entry name" value="14_3_3"/>
    <property type="match status" value="1"/>
</dbReference>
<dbReference type="SUPFAM" id="SSF48445">
    <property type="entry name" value="14-3-3 protein"/>
    <property type="match status" value="1"/>
</dbReference>
<dbReference type="PROSITE" id="PS00796">
    <property type="entry name" value="1433_1"/>
    <property type="match status" value="1"/>
</dbReference>
<dbReference type="PROSITE" id="PS00797">
    <property type="entry name" value="1433_2"/>
    <property type="match status" value="1"/>
</dbReference>
<sequence>MASPREENVYMAKLAEQAERYEEMVEFMEKVVAAADGAEELTVEERNLLSVAYKNVIGARRASWRIISSIEQKEESRGNEDHVASIKEYRSKIESELTSICNGILKLLDSKLIGSAATGDSKVFYLKMKGDYHRYLAEFKTGAERKEAAENTLSAYKAAQDIANAELAPTHPIRLGLALNFSVFYYEILNSPDRACNLAKQAFDEAIAELDTLGEESYKDSTLIMQLLRDNLTLWTSDMQDDGTDEIKEAAPKPDNNE</sequence>
<organism>
    <name type="scientific">Solanum tuberosum</name>
    <name type="common">Potato</name>
    <dbReference type="NCBI Taxonomy" id="4113"/>
    <lineage>
        <taxon>Eukaryota</taxon>
        <taxon>Viridiplantae</taxon>
        <taxon>Streptophyta</taxon>
        <taxon>Embryophyta</taxon>
        <taxon>Tracheophyta</taxon>
        <taxon>Spermatophyta</taxon>
        <taxon>Magnoliopsida</taxon>
        <taxon>eudicotyledons</taxon>
        <taxon>Gunneridae</taxon>
        <taxon>Pentapetalae</taxon>
        <taxon>asterids</taxon>
        <taxon>lamiids</taxon>
        <taxon>Solanales</taxon>
        <taxon>Solanaceae</taxon>
        <taxon>Solanoideae</taxon>
        <taxon>Solaneae</taxon>
        <taxon>Solanum</taxon>
    </lineage>
</organism>
<feature type="chain" id="PRO_0000058700" description="14-3-3-like protein 16R">
    <location>
        <begin position="1"/>
        <end position="258"/>
    </location>
</feature>
<feature type="region of interest" description="Disordered" evidence="1">
    <location>
        <begin position="238"/>
        <end position="258"/>
    </location>
</feature>
<feature type="compositionally biased region" description="Basic and acidic residues" evidence="1">
    <location>
        <begin position="245"/>
        <end position="258"/>
    </location>
</feature>
<accession>P93784</accession>
<name>14335_SOLTU</name>